<keyword id="KW-0067">ATP-binding</keyword>
<keyword id="KW-0963">Cytoplasm</keyword>
<keyword id="KW-0315">Glutamine amidotransferase</keyword>
<keyword id="KW-0436">Ligase</keyword>
<keyword id="KW-0460">Magnesium</keyword>
<keyword id="KW-0479">Metal-binding</keyword>
<keyword id="KW-0547">Nucleotide-binding</keyword>
<keyword id="KW-0597">Phosphoprotein</keyword>
<keyword id="KW-1267">Proteomics identification</keyword>
<keyword id="KW-0658">Purine biosynthesis</keyword>
<keyword id="KW-1185">Reference proteome</keyword>
<reference key="1">
    <citation type="journal article" date="1999" name="Gene">
        <title>Human phosphoribosylformylglycinamide amidotransferase (FGARAT): regional mapping, complete coding sequence, isolation of a functional genomic clone, and DNA sequence analysis.</title>
        <authorList>
            <person name="Patterson D."/>
            <person name="Bleskan J."/>
            <person name="Gardiner K."/>
            <person name="Bowersox J."/>
        </authorList>
    </citation>
    <scope>NUCLEOTIDE SEQUENCE [MRNA]</scope>
    <scope>VARIANTS SER-19; LEU-367 AND PRO-621</scope>
    <scope>FUNCTION</scope>
    <scope>CATALYTIC ACTIVITY</scope>
</reference>
<reference key="2">
    <citation type="journal article" date="1997" name="DNA Res.">
        <title>Prediction of the coding sequences of unidentified human genes. VII. The complete sequences of 100 new cDNA clones from brain which can code for large proteins in vitro.</title>
        <authorList>
            <person name="Nagase T."/>
            <person name="Ishikawa K."/>
            <person name="Nakajima D."/>
            <person name="Ohira M."/>
            <person name="Seki N."/>
            <person name="Miyajima N."/>
            <person name="Tanaka A."/>
            <person name="Kotani H."/>
            <person name="Nomura N."/>
            <person name="Ohara O."/>
        </authorList>
    </citation>
    <scope>NUCLEOTIDE SEQUENCE [LARGE SCALE MRNA]</scope>
    <scope>VARIANTS SER-19; LEU-367 AND PRO-621</scope>
    <source>
        <tissue>Brain</tissue>
    </source>
</reference>
<reference key="3">
    <citation type="journal article" date="2006" name="Nature">
        <title>DNA sequence of human chromosome 17 and analysis of rearrangement in the human lineage.</title>
        <authorList>
            <person name="Zody M.C."/>
            <person name="Garber M."/>
            <person name="Adams D.J."/>
            <person name="Sharpe T."/>
            <person name="Harrow J."/>
            <person name="Lupski J.R."/>
            <person name="Nicholson C."/>
            <person name="Searle S.M."/>
            <person name="Wilming L."/>
            <person name="Young S.K."/>
            <person name="Abouelleil A."/>
            <person name="Allen N.R."/>
            <person name="Bi W."/>
            <person name="Bloom T."/>
            <person name="Borowsky M.L."/>
            <person name="Bugalter B.E."/>
            <person name="Butler J."/>
            <person name="Chang J.L."/>
            <person name="Chen C.-K."/>
            <person name="Cook A."/>
            <person name="Corum B."/>
            <person name="Cuomo C.A."/>
            <person name="de Jong P.J."/>
            <person name="DeCaprio D."/>
            <person name="Dewar K."/>
            <person name="FitzGerald M."/>
            <person name="Gilbert J."/>
            <person name="Gibson R."/>
            <person name="Gnerre S."/>
            <person name="Goldstein S."/>
            <person name="Grafham D.V."/>
            <person name="Grocock R."/>
            <person name="Hafez N."/>
            <person name="Hagopian D.S."/>
            <person name="Hart E."/>
            <person name="Norman C.H."/>
            <person name="Humphray S."/>
            <person name="Jaffe D.B."/>
            <person name="Jones M."/>
            <person name="Kamal M."/>
            <person name="Khodiyar V.K."/>
            <person name="LaButti K."/>
            <person name="Laird G."/>
            <person name="Lehoczky J."/>
            <person name="Liu X."/>
            <person name="Lokyitsang T."/>
            <person name="Loveland J."/>
            <person name="Lui A."/>
            <person name="Macdonald P."/>
            <person name="Major J.E."/>
            <person name="Matthews L."/>
            <person name="Mauceli E."/>
            <person name="McCarroll S.A."/>
            <person name="Mihalev A.H."/>
            <person name="Mudge J."/>
            <person name="Nguyen C."/>
            <person name="Nicol R."/>
            <person name="O'Leary S.B."/>
            <person name="Osoegawa K."/>
            <person name="Schwartz D.C."/>
            <person name="Shaw-Smith C."/>
            <person name="Stankiewicz P."/>
            <person name="Steward C."/>
            <person name="Swarbreck D."/>
            <person name="Venkataraman V."/>
            <person name="Whittaker C.A."/>
            <person name="Yang X."/>
            <person name="Zimmer A.R."/>
            <person name="Bradley A."/>
            <person name="Hubbard T."/>
            <person name="Birren B.W."/>
            <person name="Rogers J."/>
            <person name="Lander E.S."/>
            <person name="Nusbaum C."/>
        </authorList>
    </citation>
    <scope>NUCLEOTIDE SEQUENCE [LARGE SCALE GENOMIC DNA]</scope>
</reference>
<reference key="4">
    <citation type="journal article" date="2004" name="Genome Res.">
        <title>The status, quality, and expansion of the NIH full-length cDNA project: the Mammalian Gene Collection (MGC).</title>
        <authorList>
            <consortium name="The MGC Project Team"/>
        </authorList>
    </citation>
    <scope>NUCLEOTIDE SEQUENCE [LARGE SCALE MRNA]</scope>
    <scope>VARIANTS SER-19; LEU-367 AND PRO-621</scope>
</reference>
<reference key="5">
    <citation type="journal article" date="2006" name="Cell">
        <title>Global, in vivo, and site-specific phosphorylation dynamics in signaling networks.</title>
        <authorList>
            <person name="Olsen J.V."/>
            <person name="Blagoev B."/>
            <person name="Gnad F."/>
            <person name="Macek B."/>
            <person name="Kumar C."/>
            <person name="Mortensen P."/>
            <person name="Mann M."/>
        </authorList>
    </citation>
    <scope>PHOSPHORYLATION [LARGE SCALE ANALYSIS] AT SER-569</scope>
    <scope>IDENTIFICATION BY MASS SPECTROMETRY [LARGE SCALE ANALYSIS]</scope>
    <source>
        <tissue>Cervix carcinoma</tissue>
    </source>
</reference>
<reference key="6">
    <citation type="journal article" date="2009" name="Sci. Signal.">
        <title>Quantitative phosphoproteomic analysis of T cell receptor signaling reveals system-wide modulation of protein-protein interactions.</title>
        <authorList>
            <person name="Mayya V."/>
            <person name="Lundgren D.H."/>
            <person name="Hwang S.-I."/>
            <person name="Rezaul K."/>
            <person name="Wu L."/>
            <person name="Eng J.K."/>
            <person name="Rodionov V."/>
            <person name="Han D.K."/>
        </authorList>
    </citation>
    <scope>PHOSPHORYLATION [LARGE SCALE ANALYSIS] AT THR-619 AND THR-623</scope>
    <scope>VARIANT [LARGE SCALE ANALYSIS] PRO-621</scope>
    <scope>IDENTIFICATION BY MASS SPECTROMETRY [LARGE SCALE ANALYSIS]</scope>
    <source>
        <tissue>Leukemic T-cell</tissue>
    </source>
</reference>
<reference key="7">
    <citation type="journal article" date="2010" name="Sci. Signal.">
        <title>Quantitative phosphoproteomics reveals widespread full phosphorylation site occupancy during mitosis.</title>
        <authorList>
            <person name="Olsen J.V."/>
            <person name="Vermeulen M."/>
            <person name="Santamaria A."/>
            <person name="Kumar C."/>
            <person name="Miller M.L."/>
            <person name="Jensen L.J."/>
            <person name="Gnad F."/>
            <person name="Cox J."/>
            <person name="Jensen T.S."/>
            <person name="Nigg E.A."/>
            <person name="Brunak S."/>
            <person name="Mann M."/>
        </authorList>
    </citation>
    <scope>PHOSPHORYLATION [LARGE SCALE ANALYSIS] AT SER-569 AND THR-619</scope>
    <scope>VARIANT [LARGE SCALE ANALYSIS] PRO-621</scope>
    <scope>IDENTIFICATION BY MASS SPECTROMETRY [LARGE SCALE ANALYSIS]</scope>
    <source>
        <tissue>Cervix carcinoma</tissue>
    </source>
</reference>
<reference key="8">
    <citation type="journal article" date="2011" name="BMC Syst. Biol.">
        <title>Initial characterization of the human central proteome.</title>
        <authorList>
            <person name="Burkard T.R."/>
            <person name="Planyavsky M."/>
            <person name="Kaupe I."/>
            <person name="Breitwieser F.P."/>
            <person name="Buerckstuemmer T."/>
            <person name="Bennett K.L."/>
            <person name="Superti-Furga G."/>
            <person name="Colinge J."/>
        </authorList>
    </citation>
    <scope>IDENTIFICATION BY MASS SPECTROMETRY [LARGE SCALE ANALYSIS]</scope>
</reference>
<reference key="9">
    <citation type="journal article" date="2011" name="Sci. Signal.">
        <title>System-wide temporal characterization of the proteome and phosphoproteome of human embryonic stem cell differentiation.</title>
        <authorList>
            <person name="Rigbolt K.T."/>
            <person name="Prokhorova T.A."/>
            <person name="Akimov V."/>
            <person name="Henningsen J."/>
            <person name="Johansen P.T."/>
            <person name="Kratchmarova I."/>
            <person name="Kassem M."/>
            <person name="Mann M."/>
            <person name="Olsen J.V."/>
            <person name="Blagoev B."/>
        </authorList>
    </citation>
    <scope>PHOSPHORYLATION [LARGE SCALE ANALYSIS] AT SER-569</scope>
    <scope>VARIANT [LARGE SCALE ANALYSIS] PRO-621</scope>
    <scope>IDENTIFICATION BY MASS SPECTROMETRY [LARGE SCALE ANALYSIS]</scope>
</reference>
<reference key="10">
    <citation type="journal article" date="2013" name="J. Proteome Res.">
        <title>Toward a comprehensive characterization of a human cancer cell phosphoproteome.</title>
        <authorList>
            <person name="Zhou H."/>
            <person name="Di Palma S."/>
            <person name="Preisinger C."/>
            <person name="Peng M."/>
            <person name="Polat A.N."/>
            <person name="Heck A.J."/>
            <person name="Mohammed S."/>
        </authorList>
    </citation>
    <scope>PHOSPHORYLATION [LARGE SCALE ANALYSIS] AT SER-215 AND SER-569</scope>
    <scope>IDENTIFICATION BY MASS SPECTROMETRY [LARGE SCALE ANALYSIS]</scope>
    <source>
        <tissue>Cervix carcinoma</tissue>
        <tissue>Erythroleukemia</tissue>
    </source>
</reference>
<reference key="11">
    <citation type="journal article" date="2014" name="J. Proteomics">
        <title>An enzyme assisted RP-RPLC approach for in-depth analysis of human liver phosphoproteome.</title>
        <authorList>
            <person name="Bian Y."/>
            <person name="Song C."/>
            <person name="Cheng K."/>
            <person name="Dong M."/>
            <person name="Wang F."/>
            <person name="Huang J."/>
            <person name="Sun D."/>
            <person name="Wang L."/>
            <person name="Ye M."/>
            <person name="Zou H."/>
        </authorList>
    </citation>
    <scope>IDENTIFICATION BY MASS SPECTROMETRY [LARGE SCALE ANALYSIS]</scope>
    <source>
        <tissue>Liver</tissue>
    </source>
</reference>
<reference key="12">
    <citation type="journal article" date="2009" name="Anal. Chem.">
        <title>Lys-N and trypsin cover complementary parts of the phosphoproteome in a refined SCX-based approach.</title>
        <authorList>
            <person name="Gauci S."/>
            <person name="Helbig A.O."/>
            <person name="Slijper M."/>
            <person name="Krijgsveld J."/>
            <person name="Heck A.J."/>
            <person name="Mohammed S."/>
        </authorList>
    </citation>
    <scope>VARIANT [LARGE SCALE ANALYSIS] PRO-621</scope>
    <scope>IDENTIFICATION BY MASS SPECTROMETRY [LARGE SCALE ANALYSIS]</scope>
</reference>
<proteinExistence type="evidence at protein level"/>
<dbReference type="EC" id="6.3.5.3" evidence="8"/>
<dbReference type="EMBL" id="AB002359">
    <property type="protein sequence ID" value="BAA20816.1"/>
    <property type="status" value="ALT_INIT"/>
    <property type="molecule type" value="mRNA"/>
</dbReference>
<dbReference type="EMBL" id="AC135178">
    <property type="status" value="NOT_ANNOTATED_CDS"/>
    <property type="molecule type" value="Genomic_DNA"/>
</dbReference>
<dbReference type="EMBL" id="BC146768">
    <property type="protein sequence ID" value="AAI46769.1"/>
    <property type="molecule type" value="mRNA"/>
</dbReference>
<dbReference type="EMBL" id="BC167158">
    <property type="protein sequence ID" value="AAI67158.1"/>
    <property type="molecule type" value="mRNA"/>
</dbReference>
<dbReference type="CCDS" id="CCDS11136.1"/>
<dbReference type="RefSeq" id="NP_036525.1">
    <property type="nucleotide sequence ID" value="NM_012393.3"/>
</dbReference>
<dbReference type="RefSeq" id="XP_024306572.1">
    <property type="nucleotide sequence ID" value="XM_024450804.2"/>
</dbReference>
<dbReference type="SMR" id="O15067"/>
<dbReference type="BioGRID" id="111221">
    <property type="interactions" value="180"/>
</dbReference>
<dbReference type="FunCoup" id="O15067">
    <property type="interactions" value="1969"/>
</dbReference>
<dbReference type="IntAct" id="O15067">
    <property type="interactions" value="23"/>
</dbReference>
<dbReference type="MINT" id="O15067"/>
<dbReference type="STRING" id="9606.ENSP00000313490"/>
<dbReference type="ChEMBL" id="CHEMBL4295655"/>
<dbReference type="DrugBank" id="DB00142">
    <property type="generic name" value="Glutamic acid"/>
</dbReference>
<dbReference type="DrugBank" id="DB00130">
    <property type="generic name" value="L-Glutamine"/>
</dbReference>
<dbReference type="MEROPS" id="C56.972"/>
<dbReference type="GlyCosmos" id="O15067">
    <property type="glycosylation" value="1 site, 1 glycan"/>
</dbReference>
<dbReference type="GlyGen" id="O15067">
    <property type="glycosylation" value="3 sites, 1 O-linked glycan (2 sites)"/>
</dbReference>
<dbReference type="iPTMnet" id="O15067"/>
<dbReference type="MetOSite" id="O15067"/>
<dbReference type="PhosphoSitePlus" id="O15067"/>
<dbReference type="SwissPalm" id="O15067"/>
<dbReference type="BioMuta" id="PFAS"/>
<dbReference type="jPOST" id="O15067"/>
<dbReference type="MassIVE" id="O15067"/>
<dbReference type="PaxDb" id="9606-ENSP00000313490"/>
<dbReference type="PeptideAtlas" id="O15067"/>
<dbReference type="ProteomicsDB" id="48417"/>
<dbReference type="Pumba" id="O15067"/>
<dbReference type="Antibodypedia" id="12486">
    <property type="antibodies" value="136 antibodies from 26 providers"/>
</dbReference>
<dbReference type="DNASU" id="5198"/>
<dbReference type="Ensembl" id="ENST00000314666.11">
    <property type="protein sequence ID" value="ENSP00000313490.6"/>
    <property type="gene ID" value="ENSG00000178921.14"/>
</dbReference>
<dbReference type="GeneID" id="5198"/>
<dbReference type="KEGG" id="hsa:5198"/>
<dbReference type="MANE-Select" id="ENST00000314666.11">
    <property type="protein sequence ID" value="ENSP00000313490.6"/>
    <property type="RefSeq nucleotide sequence ID" value="NM_012393.3"/>
    <property type="RefSeq protein sequence ID" value="NP_036525.1"/>
</dbReference>
<dbReference type="UCSC" id="uc002gkr.4">
    <property type="organism name" value="human"/>
</dbReference>
<dbReference type="AGR" id="HGNC:8863"/>
<dbReference type="CTD" id="5198"/>
<dbReference type="DisGeNET" id="5198"/>
<dbReference type="GeneCards" id="PFAS"/>
<dbReference type="HGNC" id="HGNC:8863">
    <property type="gene designation" value="PFAS"/>
</dbReference>
<dbReference type="HPA" id="ENSG00000178921">
    <property type="expression patterns" value="Low tissue specificity"/>
</dbReference>
<dbReference type="MalaCards" id="PFAS"/>
<dbReference type="MIM" id="602133">
    <property type="type" value="gene"/>
</dbReference>
<dbReference type="neXtProt" id="NX_O15067"/>
<dbReference type="OpenTargets" id="ENSG00000178921"/>
<dbReference type="VEuPathDB" id="HostDB:ENSG00000178921"/>
<dbReference type="eggNOG" id="KOG1907">
    <property type="taxonomic scope" value="Eukaryota"/>
</dbReference>
<dbReference type="GeneTree" id="ENSGT00390000007600"/>
<dbReference type="HOGENOM" id="CLU_001031_0_0_1"/>
<dbReference type="InParanoid" id="O15067"/>
<dbReference type="OMA" id="LSANWMW"/>
<dbReference type="OrthoDB" id="6666987at2759"/>
<dbReference type="PAN-GO" id="O15067">
    <property type="GO annotations" value="0 GO annotations based on evolutionary models"/>
</dbReference>
<dbReference type="PhylomeDB" id="O15067"/>
<dbReference type="TreeFam" id="TF106371"/>
<dbReference type="BioCyc" id="MetaCyc:HS11329-MONOMER"/>
<dbReference type="BRENDA" id="6.3.5.3">
    <property type="organism ID" value="2681"/>
</dbReference>
<dbReference type="PathwayCommons" id="O15067"/>
<dbReference type="Reactome" id="R-HSA-73817">
    <property type="pathway name" value="Purine ribonucleoside monophosphate biosynthesis"/>
</dbReference>
<dbReference type="SignaLink" id="O15067"/>
<dbReference type="SIGNOR" id="O15067"/>
<dbReference type="UniPathway" id="UPA00074">
    <property type="reaction ID" value="UER00128"/>
</dbReference>
<dbReference type="BioGRID-ORCS" id="5198">
    <property type="hits" value="256 hits in 1169 CRISPR screens"/>
</dbReference>
<dbReference type="CD-CODE" id="DEE660B4">
    <property type="entry name" value="Stress granule"/>
</dbReference>
<dbReference type="ChiTaRS" id="PFAS">
    <property type="organism name" value="human"/>
</dbReference>
<dbReference type="GenomeRNAi" id="5198"/>
<dbReference type="Pharos" id="O15067">
    <property type="development level" value="Tbio"/>
</dbReference>
<dbReference type="PRO" id="PR:O15067"/>
<dbReference type="Proteomes" id="UP000005640">
    <property type="component" value="Chromosome 17"/>
</dbReference>
<dbReference type="RNAct" id="O15067">
    <property type="molecule type" value="protein"/>
</dbReference>
<dbReference type="Bgee" id="ENSG00000178921">
    <property type="expression patterns" value="Expressed in ventricular zone and 179 other cell types or tissues"/>
</dbReference>
<dbReference type="ExpressionAtlas" id="O15067">
    <property type="expression patterns" value="baseline and differential"/>
</dbReference>
<dbReference type="GO" id="GO:0005737">
    <property type="term" value="C:cytoplasm"/>
    <property type="evidence" value="ECO:0000318"/>
    <property type="project" value="GO_Central"/>
</dbReference>
<dbReference type="GO" id="GO:0005829">
    <property type="term" value="C:cytosol"/>
    <property type="evidence" value="ECO:0000304"/>
    <property type="project" value="Reactome"/>
</dbReference>
<dbReference type="GO" id="GO:0070062">
    <property type="term" value="C:extracellular exosome"/>
    <property type="evidence" value="ECO:0007005"/>
    <property type="project" value="UniProtKB"/>
</dbReference>
<dbReference type="GO" id="GO:0005524">
    <property type="term" value="F:ATP binding"/>
    <property type="evidence" value="ECO:0007669"/>
    <property type="project" value="UniProtKB-KW"/>
</dbReference>
<dbReference type="GO" id="GO:0046872">
    <property type="term" value="F:metal ion binding"/>
    <property type="evidence" value="ECO:0007669"/>
    <property type="project" value="UniProtKB-KW"/>
</dbReference>
<dbReference type="GO" id="GO:0004642">
    <property type="term" value="F:phosphoribosylformylglycinamidine synthase activity"/>
    <property type="evidence" value="ECO:0000314"/>
    <property type="project" value="UniProtKB"/>
</dbReference>
<dbReference type="GO" id="GO:0044208">
    <property type="term" value="P:'de novo' AMP biosynthetic process"/>
    <property type="evidence" value="ECO:0000314"/>
    <property type="project" value="MGI"/>
</dbReference>
<dbReference type="GO" id="GO:0006189">
    <property type="term" value="P:'de novo' IMP biosynthetic process"/>
    <property type="evidence" value="ECO:0000314"/>
    <property type="project" value="MGI"/>
</dbReference>
<dbReference type="GO" id="GO:0097294">
    <property type="term" value="P:'de novo' XMP biosynthetic process"/>
    <property type="evidence" value="ECO:0000314"/>
    <property type="project" value="MGI"/>
</dbReference>
<dbReference type="GO" id="GO:0097065">
    <property type="term" value="P:anterior head development"/>
    <property type="evidence" value="ECO:0007669"/>
    <property type="project" value="Ensembl"/>
</dbReference>
<dbReference type="GO" id="GO:0006541">
    <property type="term" value="P:glutamine metabolic process"/>
    <property type="evidence" value="ECO:0007669"/>
    <property type="project" value="Ensembl"/>
</dbReference>
<dbReference type="GO" id="GO:0006177">
    <property type="term" value="P:GMP biosynthetic process"/>
    <property type="evidence" value="ECO:0000314"/>
    <property type="project" value="MGI"/>
</dbReference>
<dbReference type="GO" id="GO:0006164">
    <property type="term" value="P:purine nucleotide biosynthetic process"/>
    <property type="evidence" value="ECO:0000318"/>
    <property type="project" value="GO_Central"/>
</dbReference>
<dbReference type="GO" id="GO:0009168">
    <property type="term" value="P:purine ribonucleoside monophosphate biosynthetic process"/>
    <property type="evidence" value="ECO:0000304"/>
    <property type="project" value="Reactome"/>
</dbReference>
<dbReference type="GO" id="GO:0009410">
    <property type="term" value="P:response to xenobiotic stimulus"/>
    <property type="evidence" value="ECO:0007669"/>
    <property type="project" value="Ensembl"/>
</dbReference>
<dbReference type="CDD" id="cd01740">
    <property type="entry name" value="GATase1_FGAR_AT"/>
    <property type="match status" value="1"/>
</dbReference>
<dbReference type="CDD" id="cd02203">
    <property type="entry name" value="PurL_repeat1"/>
    <property type="match status" value="1"/>
</dbReference>
<dbReference type="CDD" id="cd02204">
    <property type="entry name" value="PurL_repeat2"/>
    <property type="match status" value="1"/>
</dbReference>
<dbReference type="FunFam" id="3.30.1330.10:FF:000010">
    <property type="entry name" value="Phosphoribosylformylglycinamidine synthase"/>
    <property type="match status" value="1"/>
</dbReference>
<dbReference type="FunFam" id="3.90.650.10:FF:000008">
    <property type="entry name" value="Phosphoribosylformylglycinamidine synthase"/>
    <property type="match status" value="1"/>
</dbReference>
<dbReference type="FunFam" id="3.90.650.10:FF:000014">
    <property type="entry name" value="Phosphoribosylformylglycinamidine synthase"/>
    <property type="match status" value="1"/>
</dbReference>
<dbReference type="FunFam" id="3.30.1330.10:FF:000007">
    <property type="entry name" value="Phosphoribosylformylglycinamidine synthase, putative"/>
    <property type="match status" value="1"/>
</dbReference>
<dbReference type="FunFam" id="3.40.50.880:FF:000014">
    <property type="entry name" value="Phosphoribosylformylglycinamidine synthase, putative"/>
    <property type="match status" value="1"/>
</dbReference>
<dbReference type="FunFam" id="1.10.8.750:FF:000001">
    <property type="entry name" value="Putative phosphoribosylformylglycinamidine synthase"/>
    <property type="match status" value="1"/>
</dbReference>
<dbReference type="Gene3D" id="3.40.50.880">
    <property type="match status" value="1"/>
</dbReference>
<dbReference type="Gene3D" id="1.10.8.750">
    <property type="entry name" value="Phosphoribosylformylglycinamidine synthase, linker domain"/>
    <property type="match status" value="1"/>
</dbReference>
<dbReference type="Gene3D" id="3.90.650.10">
    <property type="entry name" value="PurM-like C-terminal domain"/>
    <property type="match status" value="2"/>
</dbReference>
<dbReference type="Gene3D" id="3.30.1330.10">
    <property type="entry name" value="PurM-like, N-terminal domain"/>
    <property type="match status" value="2"/>
</dbReference>
<dbReference type="HAMAP" id="MF_00419">
    <property type="entry name" value="PurL_1"/>
    <property type="match status" value="1"/>
</dbReference>
<dbReference type="InterPro" id="IPR029062">
    <property type="entry name" value="Class_I_gatase-like"/>
</dbReference>
<dbReference type="InterPro" id="IPR040707">
    <property type="entry name" value="FGAR-AT_N"/>
</dbReference>
<dbReference type="InterPro" id="IPR055181">
    <property type="entry name" value="FGAR-AT_PurM_N-like"/>
</dbReference>
<dbReference type="InterPro" id="IPR010073">
    <property type="entry name" value="PurL_large"/>
</dbReference>
<dbReference type="InterPro" id="IPR041609">
    <property type="entry name" value="PurL_linker"/>
</dbReference>
<dbReference type="InterPro" id="IPR010918">
    <property type="entry name" value="PurM-like_C_dom"/>
</dbReference>
<dbReference type="InterPro" id="IPR036676">
    <property type="entry name" value="PurM-like_C_sf"/>
</dbReference>
<dbReference type="InterPro" id="IPR036921">
    <property type="entry name" value="PurM-like_N_sf"/>
</dbReference>
<dbReference type="InterPro" id="IPR036604">
    <property type="entry name" value="PurS-like_sf"/>
</dbReference>
<dbReference type="NCBIfam" id="TIGR01735">
    <property type="entry name" value="FGAM_synt"/>
    <property type="match status" value="1"/>
</dbReference>
<dbReference type="NCBIfam" id="NF003672">
    <property type="entry name" value="PRK05297.1"/>
    <property type="match status" value="1"/>
</dbReference>
<dbReference type="PANTHER" id="PTHR10099">
    <property type="entry name" value="PHOSPHORIBOSYLFORMYLGLYCINAMIDINE SYNTHASE"/>
    <property type="match status" value="1"/>
</dbReference>
<dbReference type="PANTHER" id="PTHR10099:SF1">
    <property type="entry name" value="PHOSPHORIBOSYLFORMYLGLYCINAMIDINE SYNTHASE"/>
    <property type="match status" value="1"/>
</dbReference>
<dbReference type="Pfam" id="PF02769">
    <property type="entry name" value="AIRS_C"/>
    <property type="match status" value="2"/>
</dbReference>
<dbReference type="Pfam" id="PF18072">
    <property type="entry name" value="FGAR-AT_linker"/>
    <property type="match status" value="1"/>
</dbReference>
<dbReference type="Pfam" id="PF18076">
    <property type="entry name" value="FGAR-AT_N"/>
    <property type="match status" value="1"/>
</dbReference>
<dbReference type="Pfam" id="PF22689">
    <property type="entry name" value="FGAR-AT_PurM_N-like"/>
    <property type="match status" value="1"/>
</dbReference>
<dbReference type="Pfam" id="PF13507">
    <property type="entry name" value="GATase_5"/>
    <property type="match status" value="1"/>
</dbReference>
<dbReference type="SMART" id="SM01211">
    <property type="entry name" value="GATase_5"/>
    <property type="match status" value="1"/>
</dbReference>
<dbReference type="SUPFAM" id="SSF52317">
    <property type="entry name" value="Class I glutamine amidotransferase-like"/>
    <property type="match status" value="1"/>
</dbReference>
<dbReference type="SUPFAM" id="SSF109736">
    <property type="entry name" value="FGAM synthase PurL, linker domain"/>
    <property type="match status" value="1"/>
</dbReference>
<dbReference type="SUPFAM" id="SSF56042">
    <property type="entry name" value="PurM C-terminal domain-like"/>
    <property type="match status" value="2"/>
</dbReference>
<dbReference type="SUPFAM" id="SSF55326">
    <property type="entry name" value="PurM N-terminal domain-like"/>
    <property type="match status" value="2"/>
</dbReference>
<dbReference type="SUPFAM" id="SSF82697">
    <property type="entry name" value="PurS-like"/>
    <property type="match status" value="1"/>
</dbReference>
<dbReference type="PROSITE" id="PS51273">
    <property type="entry name" value="GATASE_TYPE_1"/>
    <property type="match status" value="1"/>
</dbReference>
<gene>
    <name type="primary">PFAS</name>
    <name type="synonym">KIAA0361</name>
</gene>
<name>PUR4_HUMAN</name>
<evidence type="ECO:0000250" key="1"/>
<evidence type="ECO:0000255" key="2"/>
<evidence type="ECO:0000269" key="3">
    <source>
    </source>
</evidence>
<evidence type="ECO:0000269" key="4">
    <source>
    </source>
</evidence>
<evidence type="ECO:0000269" key="5">
    <source>
    </source>
</evidence>
<evidence type="ECO:0000303" key="6">
    <source>
    </source>
</evidence>
<evidence type="ECO:0000305" key="7"/>
<evidence type="ECO:0000305" key="8">
    <source>
    </source>
</evidence>
<evidence type="ECO:0007744" key="9">
    <source>
    </source>
</evidence>
<evidence type="ECO:0007744" key="10">
    <source>
    </source>
</evidence>
<evidence type="ECO:0007744" key="11">
    <source>
    </source>
</evidence>
<evidence type="ECO:0007744" key="12">
    <source>
    </source>
</evidence>
<evidence type="ECO:0007744" key="13">
    <source>
    </source>
</evidence>
<evidence type="ECO:0007744" key="14">
    <source>
    </source>
</evidence>
<comment type="function">
    <text evidence="8">Phosphoribosylformylglycinamidine synthase involved in the purines biosynthetic pathway. Catalyzes the ATP-dependent conversion of formylglycinamide ribonucleotide (FGAR) and glutamine to yield formylglycinamidine ribonucleotide (FGAM) and glutamate.</text>
</comment>
<comment type="catalytic activity">
    <reaction evidence="8">
        <text>N(2)-formyl-N(1)-(5-phospho-beta-D-ribosyl)glycinamide + L-glutamine + ATP + H2O = 2-formamido-N(1)-(5-O-phospho-beta-D-ribosyl)acetamidine + L-glutamate + ADP + phosphate + H(+)</text>
        <dbReference type="Rhea" id="RHEA:17129"/>
        <dbReference type="ChEBI" id="CHEBI:15377"/>
        <dbReference type="ChEBI" id="CHEBI:15378"/>
        <dbReference type="ChEBI" id="CHEBI:29985"/>
        <dbReference type="ChEBI" id="CHEBI:30616"/>
        <dbReference type="ChEBI" id="CHEBI:43474"/>
        <dbReference type="ChEBI" id="CHEBI:58359"/>
        <dbReference type="ChEBI" id="CHEBI:147286"/>
        <dbReference type="ChEBI" id="CHEBI:147287"/>
        <dbReference type="ChEBI" id="CHEBI:456216"/>
        <dbReference type="EC" id="6.3.5.3"/>
    </reaction>
    <physiologicalReaction direction="left-to-right" evidence="8">
        <dbReference type="Rhea" id="RHEA:17130"/>
    </physiologicalReaction>
</comment>
<comment type="pathway">
    <text evidence="8">Purine metabolism; IMP biosynthesis via de novo pathway; 5-amino-1-(5-phospho-D-ribosyl)imidazole from N(2)-formyl-N(1)-(5-phospho-D-ribosyl)glycinamide: step 1/2.</text>
</comment>
<comment type="subcellular location">
    <subcellularLocation>
        <location evidence="1">Cytoplasm</location>
    </subcellularLocation>
</comment>
<comment type="similarity">
    <text evidence="7">In the N-terminal section; belongs to the FGAMS family.</text>
</comment>
<comment type="sequence caution" evidence="7">
    <conflict type="erroneous initiation">
        <sequence resource="EMBL-CDS" id="BAA20816"/>
    </conflict>
    <text>Extended N-terminus.</text>
</comment>
<accession>O15067</accession>
<accession>A6H8V8</accession>
<sequence>MSPVLHFYVRPSGHEGAAPGHTRRKLQGKLPELQGVETELCYNVNWTAEALPSAEETKKLMWLFGCPLLLDDVARESWLLPGSNDLLLEVGPRLNFSTPTSTNIVSVCRATGLGPVDRVETTRRYRLSFAHPPSAEVEAIALATLHDRMTEQHFPHPIQSFSPESMPEPLNGPINILGEGRLALEKANQELGLALDSWDLDFYTKRFQELQRNPSTVEAFDLAQSNSEHSRHWFFKGQLHVDGQKLVHSLFESIMSTQESSNPNNVLKFCDNSSAIQGKEVRFLRPEDPTRPSRFQQQQGLRHVVFTAETHNFPTGVCPFSGATTGTGGRIRDVQCTGRGAHVVAGTAGYCFGNLHIPGYNLPWEDPSFQYPGNFARPLEVAIEASNGASDYGNKFGEPVLAGFARSLGLQLPDGQRREWIKPIMFSGGIGSMEADHISKEAPEPGMEVVKVGGPVYRIGVGGGAASSVQVQGDNTSDLDFGAVQRGDPEMEQKMNRVIRACVEAPKGNPICSLHDQGAGGNGNVLKELSDPAGAIIYTSRFQLGDPTLNALEIWGAEYQESNALLLRSPNRDFLTHVSARERCPACFVGTITGDRRIVLVDDRECPVRRNGQGDAPPTPLPTPVDLELEWVLGKMPRKEFFLQRKPPMLQPLALPPGLSVHQALERVLRLPAVASKRYLTNKVDRSVGGLVAQQQCVGPLQTPLADVAVVALSHEELIGAATALGEQPVKSLLDPKVAARLAVAEALTNLVFALVTDLRDVKCSGNWMWAAKLPGEGAALADACEAMVAVMAALGVAVDGGKDSLSMAARVGTETVRAPGSLVISAYAVCPDITATVTPDLKHPEGRGHLLYVALSPGQHRLGGTALAQCFSQLGEHPPDLDLPENLVRAFSITQGLLKDRLLCSGHDVSDGGLVTCLLEMAFAGNCGLQVDVPVPRVDVLSVLFAEEPGLVLEVQEPDLAQVLKRYRDAGLHCLELGHTGEAGPHAMVRVSVNGAVVLEEPVGELRALWEETSFQLDRLQAEPRCVAEEERGLRERMGPSYCLPPTFPKASVPREPGGPSPRVAILREEGSNGDREMADAFHLAGFEVWDVTMQDLCSGAIGLDTFRGVAFVGGFSYADVLGSAKGWAAAVTFHPRAGAELRRFRKRPDTFSLGVCNGCQLLALLGWVGGDPNEDAAEMGPDSQPARPGLLLRHNLSGRYESRWASVRVGPGPALMLRGMEGAVLPVWSAHGEGYVAFSSPELQAQIEARGLAPLHWADDDGNPTEQYPLNPNGSPGGVAGICSCDGRHLAVMPHPERAVRPWQWAWRPPPFDTLTTSPWLQLFINARNWTLEGSC</sequence>
<feature type="chain" id="PRO_0000100401" description="Phosphoribosylformylglycinamidine synthase">
    <location>
        <begin position="1"/>
        <end position="1338"/>
    </location>
</feature>
<feature type="domain" description="Glutamine amidotransferase type-1">
    <location>
        <begin position="1064"/>
        <end position="1302"/>
    </location>
</feature>
<feature type="active site" description="Nucleophile" evidence="1">
    <location>
        <position position="1158"/>
    </location>
</feature>
<feature type="active site" evidence="1">
    <location>
        <position position="1297"/>
    </location>
</feature>
<feature type="active site" evidence="1">
    <location>
        <position position="1299"/>
    </location>
</feature>
<feature type="binding site" evidence="2">
    <location>
        <begin position="322"/>
        <end position="333"/>
    </location>
    <ligand>
        <name>ATP</name>
        <dbReference type="ChEBI" id="CHEBI:30616"/>
    </ligand>
</feature>
<feature type="binding site" evidence="1">
    <location>
        <begin position="402"/>
        <end position="404"/>
    </location>
    <ligand>
        <name>ATP</name>
        <dbReference type="ChEBI" id="CHEBI:30616"/>
    </ligand>
</feature>
<feature type="binding site" evidence="1">
    <location>
        <position position="706"/>
    </location>
    <ligand>
        <name>ATP</name>
        <dbReference type="ChEBI" id="CHEBI:30616"/>
    </ligand>
</feature>
<feature type="binding site" evidence="1">
    <location>
        <position position="707"/>
    </location>
    <ligand>
        <name>Mg(2+)</name>
        <dbReference type="ChEBI" id="CHEBI:18420"/>
    </ligand>
</feature>
<feature type="binding site" evidence="1">
    <location>
        <position position="746"/>
    </location>
    <ligand>
        <name>Mg(2+)</name>
        <dbReference type="ChEBI" id="CHEBI:18420"/>
    </ligand>
</feature>
<feature type="binding site" evidence="1">
    <location>
        <position position="750"/>
    </location>
    <ligand>
        <name>Mg(2+)</name>
        <dbReference type="ChEBI" id="CHEBI:18420"/>
    </ligand>
</feature>
<feature type="binding site" evidence="1">
    <location>
        <position position="909"/>
    </location>
    <ligand>
        <name>Mg(2+)</name>
        <dbReference type="ChEBI" id="CHEBI:18420"/>
    </ligand>
</feature>
<feature type="binding site" evidence="1">
    <location>
        <position position="911"/>
    </location>
    <ligand>
        <name>ATP</name>
        <dbReference type="ChEBI" id="CHEBI:30616"/>
    </ligand>
</feature>
<feature type="modified residue" description="Phosphoserine" evidence="14">
    <location>
        <position position="215"/>
    </location>
</feature>
<feature type="modified residue" description="Phosphoserine" evidence="9 12 13 14">
    <location>
        <position position="569"/>
    </location>
</feature>
<feature type="modified residue" description="Phosphothreonine" evidence="11 12">
    <location>
        <position position="619"/>
    </location>
</feature>
<feature type="modified residue" description="Phosphothreonine" evidence="11">
    <location>
        <position position="623"/>
    </location>
</feature>
<feature type="sequence variant" id="VAR_055008" description="In dbSNP:rs9891699." evidence="3 4 5">
    <original>P</original>
    <variation>S</variation>
    <location>
        <position position="19"/>
    </location>
</feature>
<feature type="sequence variant" id="VAR_055009" description="In dbSNP:rs4791641." evidence="3 4 5">
    <original>P</original>
    <variation>L</variation>
    <location>
        <position position="367"/>
    </location>
</feature>
<feature type="sequence variant" id="VAR_055010" description="In dbSNP:rs35217368.">
    <original>F</original>
    <variation>Y</variation>
    <location>
        <position position="481"/>
    </location>
</feature>
<feature type="sequence variant" id="VAR_055011" description="In dbSNP:rs11078738." evidence="3 4 5 10 11 12 13">
    <original>L</original>
    <variation>P</variation>
    <location>
        <position position="621"/>
    </location>
</feature>
<feature type="sequence conflict" description="In Ref. 1, 2; BAA20816 and 4; AAI46769/AAI67158." evidence="7" ref="1 2 4">
    <original>F</original>
    <variation>S</variation>
    <location>
        <position position="1326"/>
    </location>
</feature>
<protein>
    <recommendedName>
        <fullName>Phosphoribosylformylglycinamidine synthase</fullName>
        <shortName>FGAM synthase</shortName>
        <shortName>FGAMS</shortName>
        <ecNumber evidence="8">6.3.5.3</ecNumber>
    </recommendedName>
    <alternativeName>
        <fullName>Formylglycinamide ribonucleotide amidotransferase</fullName>
        <shortName>FGAR amidotransferase</shortName>
        <shortName evidence="6">FGAR-AT</shortName>
    </alternativeName>
    <alternativeName>
        <fullName>Formylglycinamide ribotide amidotransferase</fullName>
    </alternativeName>
    <alternativeName>
        <fullName evidence="6">Phosphoribosylformylglycineamide amidotransferase</fullName>
    </alternativeName>
</protein>
<organism>
    <name type="scientific">Homo sapiens</name>
    <name type="common">Human</name>
    <dbReference type="NCBI Taxonomy" id="9606"/>
    <lineage>
        <taxon>Eukaryota</taxon>
        <taxon>Metazoa</taxon>
        <taxon>Chordata</taxon>
        <taxon>Craniata</taxon>
        <taxon>Vertebrata</taxon>
        <taxon>Euteleostomi</taxon>
        <taxon>Mammalia</taxon>
        <taxon>Eutheria</taxon>
        <taxon>Euarchontoglires</taxon>
        <taxon>Primates</taxon>
        <taxon>Haplorrhini</taxon>
        <taxon>Catarrhini</taxon>
        <taxon>Hominidae</taxon>
        <taxon>Homo</taxon>
    </lineage>
</organism>